<accession>P53361</accession>
<organism>
    <name type="scientific">Spodoptera frugiperda</name>
    <name type="common">Fall armyworm</name>
    <dbReference type="NCBI Taxonomy" id="7108"/>
    <lineage>
        <taxon>Eukaryota</taxon>
        <taxon>Metazoa</taxon>
        <taxon>Ecdysozoa</taxon>
        <taxon>Arthropoda</taxon>
        <taxon>Hexapoda</taxon>
        <taxon>Insecta</taxon>
        <taxon>Pterygota</taxon>
        <taxon>Neoptera</taxon>
        <taxon>Endopterygota</taxon>
        <taxon>Lepidoptera</taxon>
        <taxon>Glossata</taxon>
        <taxon>Ditrysia</taxon>
        <taxon>Noctuoidea</taxon>
        <taxon>Noctuidae</taxon>
        <taxon>Amphipyrinae</taxon>
        <taxon>Spodoptera</taxon>
    </lineage>
</organism>
<feature type="chain" id="PRO_0000153966" description="TATA-box-binding protein">
    <location>
        <begin position="1"/>
        <end position="307"/>
    </location>
</feature>
<feature type="repeat" description="1">
    <location>
        <begin position="134"/>
        <end position="210"/>
    </location>
</feature>
<feature type="repeat" description="2">
    <location>
        <begin position="224"/>
        <end position="301"/>
    </location>
</feature>
<feature type="region of interest" description="Disordered" evidence="3">
    <location>
        <begin position="1"/>
        <end position="20"/>
    </location>
</feature>
<dbReference type="EMBL" id="L22538">
    <property type="protein sequence ID" value="AAA62394.1"/>
    <property type="molecule type" value="mRNA"/>
</dbReference>
<dbReference type="SMR" id="P53361"/>
<dbReference type="EnsemblMetazoa" id="XM_035602171.2">
    <property type="protein sequence ID" value="XP_035458064.1"/>
    <property type="gene ID" value="LOC118281569"/>
</dbReference>
<dbReference type="OrthoDB" id="2127950at2759"/>
<dbReference type="Proteomes" id="UP000829999">
    <property type="component" value="Unplaced"/>
</dbReference>
<dbReference type="GO" id="GO:0005634">
    <property type="term" value="C:nucleus"/>
    <property type="evidence" value="ECO:0000250"/>
    <property type="project" value="UniProtKB"/>
</dbReference>
<dbReference type="GO" id="GO:0005669">
    <property type="term" value="C:transcription factor TFIID complex"/>
    <property type="evidence" value="ECO:0000250"/>
    <property type="project" value="UniProtKB"/>
</dbReference>
<dbReference type="GO" id="GO:0003677">
    <property type="term" value="F:DNA binding"/>
    <property type="evidence" value="ECO:0007669"/>
    <property type="project" value="UniProtKB-KW"/>
</dbReference>
<dbReference type="GO" id="GO:0000995">
    <property type="term" value="F:RNA polymerase III general transcription initiation factor activity"/>
    <property type="evidence" value="ECO:0000250"/>
    <property type="project" value="UniProtKB"/>
</dbReference>
<dbReference type="GO" id="GO:0006352">
    <property type="term" value="P:DNA-templated transcription initiation"/>
    <property type="evidence" value="ECO:0007669"/>
    <property type="project" value="InterPro"/>
</dbReference>
<dbReference type="GO" id="GO:0006366">
    <property type="term" value="P:transcription by RNA polymerase II"/>
    <property type="evidence" value="ECO:0000250"/>
    <property type="project" value="UniProtKB"/>
</dbReference>
<dbReference type="GO" id="GO:0006383">
    <property type="term" value="P:transcription by RNA polymerase III"/>
    <property type="evidence" value="ECO:0000250"/>
    <property type="project" value="UniProtKB"/>
</dbReference>
<dbReference type="CDD" id="cd04516">
    <property type="entry name" value="TBP_eukaryotes"/>
    <property type="match status" value="1"/>
</dbReference>
<dbReference type="FunFam" id="3.30.310.10:FF:000001">
    <property type="entry name" value="TATA-box-binding protein 2"/>
    <property type="match status" value="1"/>
</dbReference>
<dbReference type="FunFam" id="3.30.310.10:FF:000002">
    <property type="entry name" value="TATA-box-binding protein 2"/>
    <property type="match status" value="1"/>
</dbReference>
<dbReference type="Gene3D" id="3.30.310.10">
    <property type="entry name" value="TATA-Binding Protein"/>
    <property type="match status" value="2"/>
</dbReference>
<dbReference type="HAMAP" id="MF_00408">
    <property type="entry name" value="TATA_bind_prot_arch"/>
    <property type="match status" value="1"/>
</dbReference>
<dbReference type="InterPro" id="IPR000814">
    <property type="entry name" value="TBP"/>
</dbReference>
<dbReference type="InterPro" id="IPR030491">
    <property type="entry name" value="TBP_CS"/>
</dbReference>
<dbReference type="InterPro" id="IPR012295">
    <property type="entry name" value="TBP_dom_sf"/>
</dbReference>
<dbReference type="InterPro" id="IPR033710">
    <property type="entry name" value="TBP_eukaryotic"/>
</dbReference>
<dbReference type="PANTHER" id="PTHR10126">
    <property type="entry name" value="TATA-BOX BINDING PROTEIN"/>
    <property type="match status" value="1"/>
</dbReference>
<dbReference type="Pfam" id="PF00352">
    <property type="entry name" value="TBP"/>
    <property type="match status" value="2"/>
</dbReference>
<dbReference type="PRINTS" id="PR00686">
    <property type="entry name" value="TIFACTORIID"/>
</dbReference>
<dbReference type="SUPFAM" id="SSF55945">
    <property type="entry name" value="TATA-box binding protein-like"/>
    <property type="match status" value="2"/>
</dbReference>
<dbReference type="PROSITE" id="PS00351">
    <property type="entry name" value="TFIID"/>
    <property type="match status" value="2"/>
</dbReference>
<proteinExistence type="evidence at transcript level"/>
<name>TBP_SPOFR</name>
<comment type="function">
    <text evidence="2">General transcription factor that functions at the core of the DNA-binding multiprotein factor TFIID. Binding of TFIID to the TATA box is the initial transcriptional step of the pre-initiation complex (PIC), playing a role in the activation of eukaryotic genes transcribed by RNA polymerase II.</text>
</comment>
<comment type="subunit">
    <text evidence="2">Belongs to the TFIID complex together with the TBP-associated factors (TAFs). Binds DNA as monomer.</text>
</comment>
<comment type="subcellular location">
    <subcellularLocation>
        <location evidence="1">Nucleus</location>
    </subcellularLocation>
</comment>
<comment type="similarity">
    <text evidence="4">Belongs to the TBP family.</text>
</comment>
<protein>
    <recommendedName>
        <fullName>TATA-box-binding protein</fullName>
    </recommendedName>
    <alternativeName>
        <fullName>TATA sequence-binding protein</fullName>
        <shortName>TBP</shortName>
    </alternativeName>
    <alternativeName>
        <fullName>TATA-binding factor</fullName>
    </alternativeName>
    <alternativeName>
        <fullName>TATA-box factor</fullName>
    </alternativeName>
    <alternativeName>
        <fullName>Transcription initiation factor TFIID TBP subunit</fullName>
    </alternativeName>
</protein>
<keyword id="KW-0238">DNA-binding</keyword>
<keyword id="KW-0539">Nucleus</keyword>
<keyword id="KW-0677">Repeat</keyword>
<keyword id="KW-0804">Transcription</keyword>
<evidence type="ECO:0000250" key="1">
    <source>
        <dbReference type="UniProtKB" id="P20226"/>
    </source>
</evidence>
<evidence type="ECO:0000250" key="2">
    <source>
        <dbReference type="UniProtKB" id="P20227"/>
    </source>
</evidence>
<evidence type="ECO:0000256" key="3">
    <source>
        <dbReference type="SAM" id="MobiDB-lite"/>
    </source>
</evidence>
<evidence type="ECO:0000305" key="4"/>
<sequence length="307" mass="34090">MDQMLPSPYNIPGIDTPLHQPEEDQQILPNAMQQQHQHQQQQQQHALAAMGSSPLVGFGASLMGTPQRSVHTYAPAASYATPQQMMQPQTPQNLMSPMITSGSLAGQQMLSQASPAPMTPMTPHSADPGIVPQLQNIVSTVNLNCKLDLKKIALHARNAEYNPKRFAAVIMRIREPRTTALIFSSGKMVCTGAKSEEDSRLAARKYARIIQKLGFTAKFLDFKIQNMVGSCDVKFPIRLEGLVLTHGQFSSYEPELFPGLIYRMVKPRIVLLIFVSGKVVLTGAKVREEIYEAFDNIYPILKSFKKQ</sequence>
<gene>
    <name type="primary">Tbp</name>
</gene>
<reference key="1">
    <citation type="journal article" date="1994" name="Insect Biochem. Mol. Biol.">
        <title>Characterization of the Spodoptera frugiperda TATA-binding protein: nucleotide sequence and response to baculovirus infection.</title>
        <authorList>
            <person name="Rasmussen C."/>
            <person name="Rohrmann G.F."/>
        </authorList>
    </citation>
    <scope>NUCLEOTIDE SEQUENCE [MRNA]</scope>
</reference>